<sequence length="196" mass="21342">MAVMMRTQAPAATRASSRVAVAARPAARRAVVVRAEAEAAPAAAKKAAEKPAWTVPTLNPDTPSPIFGGSTGGLLRKAQTEEFYVITWEAKKEQIFEMPTGGAAIMRQGPNLLKFGKKEQCLALTTQLRNKFKLTPCFYRVFPDGKVQYLHPADGVYPEKVNAGRVGANQNMRRIGQNVNPIKVKFSGRMMSPAEI</sequence>
<evidence type="ECO:0000250" key="1"/>
<evidence type="ECO:0000255" key="2"/>
<evidence type="ECO:0000305" key="3"/>
<evidence type="ECO:0007829" key="4">
    <source>
        <dbReference type="PDB" id="6IJO"/>
    </source>
</evidence>
<evidence type="ECO:0007829" key="5">
    <source>
        <dbReference type="PDB" id="7R3K"/>
    </source>
</evidence>
<proteinExistence type="evidence at protein level"/>
<gene>
    <name type="primary">psaD</name>
</gene>
<dbReference type="EMBL" id="X79674">
    <property type="protein sequence ID" value="CAA56122.1"/>
    <property type="molecule type" value="mRNA"/>
</dbReference>
<dbReference type="EMBL" id="X74419">
    <property type="protein sequence ID" value="CAA52440.1"/>
    <property type="molecule type" value="mRNA"/>
</dbReference>
<dbReference type="PIR" id="S47088">
    <property type="entry name" value="S47088"/>
</dbReference>
<dbReference type="RefSeq" id="XP_001697722.1">
    <property type="nucleotide sequence ID" value="XM_001697670.1"/>
</dbReference>
<dbReference type="PDB" id="6IJJ">
    <property type="method" value="EM"/>
    <property type="resolution" value="2.89 A"/>
    <property type="chains" value="D=1-196"/>
</dbReference>
<dbReference type="PDB" id="6IJO">
    <property type="method" value="EM"/>
    <property type="resolution" value="3.30 A"/>
    <property type="chains" value="D=1-196"/>
</dbReference>
<dbReference type="PDB" id="6JO5">
    <property type="method" value="EM"/>
    <property type="resolution" value="2.90 A"/>
    <property type="chains" value="D=36-196"/>
</dbReference>
<dbReference type="PDB" id="6JO6">
    <property type="method" value="EM"/>
    <property type="resolution" value="2.90 A"/>
    <property type="chains" value="D=36-196"/>
</dbReference>
<dbReference type="PDB" id="7BGI">
    <property type="method" value="EM"/>
    <property type="resolution" value="2.54 A"/>
    <property type="chains" value="D=53-196"/>
</dbReference>
<dbReference type="PDB" id="7BLX">
    <property type="method" value="EM"/>
    <property type="resolution" value="3.15 A"/>
    <property type="chains" value="D=53-196"/>
</dbReference>
<dbReference type="PDB" id="7D0J">
    <property type="method" value="EM"/>
    <property type="resolution" value="3.42 A"/>
    <property type="chains" value="D=53-196"/>
</dbReference>
<dbReference type="PDB" id="7DZ7">
    <property type="method" value="EM"/>
    <property type="resolution" value="2.84 A"/>
    <property type="chains" value="D=1-196"/>
</dbReference>
<dbReference type="PDB" id="7DZ8">
    <property type="method" value="EM"/>
    <property type="resolution" value="3.16 A"/>
    <property type="chains" value="D=1-196"/>
</dbReference>
<dbReference type="PDB" id="7O01">
    <property type="method" value="EM"/>
    <property type="resolution" value="17.10 A"/>
    <property type="chains" value="D/d=53-196"/>
</dbReference>
<dbReference type="PDB" id="7R3K">
    <property type="method" value="EM"/>
    <property type="resolution" value="2.52 A"/>
    <property type="chains" value="D=1-196"/>
</dbReference>
<dbReference type="PDB" id="7WYI">
    <property type="method" value="EM"/>
    <property type="resolution" value="3.90 A"/>
    <property type="chains" value="D=1-196"/>
</dbReference>
<dbReference type="PDB" id="7WZN">
    <property type="method" value="EM"/>
    <property type="resolution" value="4.90 A"/>
    <property type="chains" value="D=1-196"/>
</dbReference>
<dbReference type="PDB" id="7ZQ9">
    <property type="method" value="EM"/>
    <property type="resolution" value="2.74 A"/>
    <property type="chains" value="D=1-196"/>
</dbReference>
<dbReference type="PDB" id="7ZQC">
    <property type="method" value="EM"/>
    <property type="resolution" value="2.31 A"/>
    <property type="chains" value="D=1-196"/>
</dbReference>
<dbReference type="PDB" id="7ZQD">
    <property type="method" value="EM"/>
    <property type="resolution" value="2.97 A"/>
    <property type="chains" value="D/D2=1-196"/>
</dbReference>
<dbReference type="PDB" id="8H2U">
    <property type="method" value="X-ray"/>
    <property type="resolution" value="3.40 A"/>
    <property type="chains" value="D=1-196"/>
</dbReference>
<dbReference type="PDBsum" id="6IJJ"/>
<dbReference type="PDBsum" id="6IJO"/>
<dbReference type="PDBsum" id="6JO5"/>
<dbReference type="PDBsum" id="6JO6"/>
<dbReference type="PDBsum" id="7BGI"/>
<dbReference type="PDBsum" id="7BLX"/>
<dbReference type="PDBsum" id="7D0J"/>
<dbReference type="PDBsum" id="7DZ7"/>
<dbReference type="PDBsum" id="7DZ8"/>
<dbReference type="PDBsum" id="7O01"/>
<dbReference type="PDBsum" id="7R3K"/>
<dbReference type="PDBsum" id="7WYI"/>
<dbReference type="PDBsum" id="7WZN"/>
<dbReference type="PDBsum" id="7ZQ9"/>
<dbReference type="PDBsum" id="7ZQC"/>
<dbReference type="PDBsum" id="7ZQD"/>
<dbReference type="PDBsum" id="8H2U"/>
<dbReference type="EMDB" id="EMD-12180"/>
<dbReference type="EMDB" id="EMD-12227"/>
<dbReference type="EMDB" id="EMD-12672"/>
<dbReference type="EMDB" id="EMD-14248"/>
<dbReference type="EMDB" id="EMD-14867"/>
<dbReference type="EMDB" id="EMD-14870"/>
<dbReference type="EMDB" id="EMD-14871"/>
<dbReference type="EMDB" id="EMD-30536"/>
<dbReference type="EMDB" id="EMD-30925"/>
<dbReference type="EMDB" id="EMD-30926"/>
<dbReference type="EMDB" id="EMD-32892"/>
<dbReference type="EMDB" id="EMD-32907"/>
<dbReference type="EMDB" id="EMD-9678"/>
<dbReference type="EMDB" id="EMD-9853"/>
<dbReference type="EMDB" id="EMD-9854"/>
<dbReference type="SMR" id="Q39615"/>
<dbReference type="IntAct" id="Q39615">
    <property type="interactions" value="7"/>
</dbReference>
<dbReference type="PaxDb" id="3055-EDO99874"/>
<dbReference type="ProMEX" id="Q39615"/>
<dbReference type="EnsemblPlants" id="PNW83660">
    <property type="protein sequence ID" value="PNW83660"/>
    <property type="gene ID" value="CHLRE_05g238332v5"/>
</dbReference>
<dbReference type="Gramene" id="PNW83660">
    <property type="protein sequence ID" value="PNW83660"/>
    <property type="gene ID" value="CHLRE_05g238332v5"/>
</dbReference>
<dbReference type="KEGG" id="cre:CHLRE_05g238332v5"/>
<dbReference type="eggNOG" id="ENOG502QQIC">
    <property type="taxonomic scope" value="Eukaryota"/>
</dbReference>
<dbReference type="HOGENOM" id="CLU_087107_0_0_1"/>
<dbReference type="OMA" id="HNPRRIG"/>
<dbReference type="OrthoDB" id="44at2759"/>
<dbReference type="BioCyc" id="CHLAMY:CHLREDRAFT_184971-MONOMER"/>
<dbReference type="BioCyc" id="MetaCyc:CHLREDRAFT_184971-MONOMER"/>
<dbReference type="GO" id="GO:0009535">
    <property type="term" value="C:chloroplast thylakoid membrane"/>
    <property type="evidence" value="ECO:0007669"/>
    <property type="project" value="UniProtKB-SubCell"/>
</dbReference>
<dbReference type="GO" id="GO:0009538">
    <property type="term" value="C:photosystem I reaction center"/>
    <property type="evidence" value="ECO:0007669"/>
    <property type="project" value="InterPro"/>
</dbReference>
<dbReference type="GO" id="GO:0015979">
    <property type="term" value="P:photosynthesis"/>
    <property type="evidence" value="ECO:0007669"/>
    <property type="project" value="UniProtKB-KW"/>
</dbReference>
<dbReference type="Gene3D" id="3.30.1470.10">
    <property type="entry name" value="Photosystem I PsaD, reaction center subunit II"/>
    <property type="match status" value="1"/>
</dbReference>
<dbReference type="InterPro" id="IPR003685">
    <property type="entry name" value="PsaD"/>
</dbReference>
<dbReference type="InterPro" id="IPR036579">
    <property type="entry name" value="PsaD_sf"/>
</dbReference>
<dbReference type="PANTHER" id="PTHR31982:SF5">
    <property type="entry name" value="PHOTOSYSTEM I REACTION CENTER SUBUNIT II, CHLOROPLASTIC"/>
    <property type="match status" value="1"/>
</dbReference>
<dbReference type="PANTHER" id="PTHR31982">
    <property type="entry name" value="PHOTOSYSTEM I REACTION CENTER SUBUNIT II-1, CHLOROPLASTIC-RELATED"/>
    <property type="match status" value="1"/>
</dbReference>
<dbReference type="Pfam" id="PF02531">
    <property type="entry name" value="PsaD"/>
    <property type="match status" value="1"/>
</dbReference>
<dbReference type="SUPFAM" id="SSF64234">
    <property type="entry name" value="Photosystem I subunit PsaD"/>
    <property type="match status" value="1"/>
</dbReference>
<comment type="function">
    <text>PsaD can form complexes with ferredoxin and ferredoxin-oxidoreductase in photosystem I (PS I) reaction center. PSAD may encode the ferredoxin-docking protein.</text>
</comment>
<comment type="interaction">
    <interactant intactId="EBI-601809">
        <id>Q39615</id>
    </interactant>
    <interactant intactId="EBI-601814">
        <id>P12356</id>
        <label>PSAF</label>
    </interactant>
    <organismsDiffer>false</organismsDiffer>
    <experiments>2</experiments>
</comment>
<comment type="interaction">
    <interactant intactId="EBI-601809">
        <id>Q39615</id>
    </interactant>
    <interactant intactId="EBI-601871">
        <id>O20031</id>
        <label>ycf3</label>
    </interactant>
    <organismsDiffer>false</organismsDiffer>
    <experiments>4</experiments>
</comment>
<comment type="subcellular location">
    <subcellularLocation>
        <location evidence="1">Plastid</location>
        <location evidence="1">Chloroplast thylakoid membrane</location>
        <topology evidence="1">Peripheral membrane protein</topology>
        <orientation evidence="1">Stromal side</orientation>
    </subcellularLocation>
</comment>
<comment type="similarity">
    <text evidence="3">Belongs to the PsaD family.</text>
</comment>
<feature type="transit peptide" description="Chloroplast" evidence="2">
    <location>
        <begin position="1"/>
        <end position="35"/>
    </location>
</feature>
<feature type="chain" id="PRO_0000029372" description="Photosystem I reaction center subunit II, chloroplastic">
    <location>
        <begin position="36"/>
        <end position="196"/>
    </location>
</feature>
<feature type="strand" evidence="5">
    <location>
        <begin position="71"/>
        <end position="73"/>
    </location>
</feature>
<feature type="helix" evidence="5">
    <location>
        <begin position="77"/>
        <end position="80"/>
    </location>
</feature>
<feature type="strand" evidence="5">
    <location>
        <begin position="83"/>
        <end position="92"/>
    </location>
</feature>
<feature type="strand" evidence="5">
    <location>
        <begin position="95"/>
        <end position="97"/>
    </location>
</feature>
<feature type="strand" evidence="5">
    <location>
        <begin position="101"/>
        <end position="105"/>
    </location>
</feature>
<feature type="strand" evidence="5">
    <location>
        <begin position="108"/>
        <end position="117"/>
    </location>
</feature>
<feature type="helix" evidence="5">
    <location>
        <begin position="118"/>
        <end position="132"/>
    </location>
</feature>
<feature type="strand" evidence="5">
    <location>
        <begin position="137"/>
        <end position="141"/>
    </location>
</feature>
<feature type="strand" evidence="5">
    <location>
        <begin position="147"/>
        <end position="152"/>
    </location>
</feature>
<feature type="strand" evidence="4">
    <location>
        <begin position="163"/>
        <end position="165"/>
    </location>
</feature>
<feature type="strand" evidence="5">
    <location>
        <begin position="169"/>
        <end position="173"/>
    </location>
</feature>
<feature type="helix" evidence="5">
    <location>
        <begin position="175"/>
        <end position="177"/>
    </location>
</feature>
<feature type="helix" evidence="5">
    <location>
        <begin position="181"/>
        <end position="184"/>
    </location>
</feature>
<feature type="strand" evidence="5">
    <location>
        <begin position="187"/>
        <end position="190"/>
    </location>
</feature>
<feature type="turn" evidence="5">
    <location>
        <begin position="193"/>
        <end position="195"/>
    </location>
</feature>
<reference key="1">
    <citation type="journal article" date="1995" name="Plant Physiol.">
        <title>Cloning and sequencing of a cDNA clone encoding the photosystem I PsaD subunit from Chlamydomonas reinhardtii.</title>
        <authorList>
            <person name="Farah J.A."/>
            <person name="Frank G."/>
            <person name="Zuber H."/>
            <person name="Rochaix J.-D."/>
        </authorList>
    </citation>
    <scope>NUCLEOTIDE SEQUENCE [MRNA]</scope>
</reference>
<reference key="2">
    <citation type="journal article" date="1996" name="Mol. Gen. Genet.">
        <title>Altered expression of nuclear genes encoding chloroplast polypeptides in non-photosynthetic mutants of Chlamydomonas reinhardtii: evidence for post-transcriptional regulation.</title>
        <authorList>
            <person name="Hahn D."/>
            <person name="Bennoun P."/>
            <person name="Kueck U."/>
        </authorList>
    </citation>
    <scope>NUCLEOTIDE SEQUENCE [MRNA]</scope>
    <source>
        <strain>CC-406</strain>
    </source>
</reference>
<name>PSAD_CHLRE</name>
<protein>
    <recommendedName>
        <fullName>Photosystem I reaction center subunit II, chloroplastic</fullName>
    </recommendedName>
    <alternativeName>
        <fullName>Photosystem I 20 kDa subunit</fullName>
        <shortName>PSI-D</shortName>
    </alternativeName>
</protein>
<organism>
    <name type="scientific">Chlamydomonas reinhardtii</name>
    <name type="common">Chlamydomonas smithii</name>
    <dbReference type="NCBI Taxonomy" id="3055"/>
    <lineage>
        <taxon>Eukaryota</taxon>
        <taxon>Viridiplantae</taxon>
        <taxon>Chlorophyta</taxon>
        <taxon>core chlorophytes</taxon>
        <taxon>Chlorophyceae</taxon>
        <taxon>CS clade</taxon>
        <taxon>Chlamydomonadales</taxon>
        <taxon>Chlamydomonadaceae</taxon>
        <taxon>Chlamydomonas</taxon>
    </lineage>
</organism>
<accession>Q39615</accession>
<keyword id="KW-0002">3D-structure</keyword>
<keyword id="KW-0150">Chloroplast</keyword>
<keyword id="KW-0472">Membrane</keyword>
<keyword id="KW-0602">Photosynthesis</keyword>
<keyword id="KW-0603">Photosystem I</keyword>
<keyword id="KW-0934">Plastid</keyword>
<keyword id="KW-0793">Thylakoid</keyword>
<keyword id="KW-0809">Transit peptide</keyword>